<keyword id="KW-0903">Direct protein sequencing</keyword>
<keyword id="KW-1015">Disulfide bond</keyword>
<keyword id="KW-0382">Hypotensive agent</keyword>
<keyword id="KW-0964">Secreted</keyword>
<keyword id="KW-0800">Toxin</keyword>
<keyword id="KW-0838">Vasoactive</keyword>
<keyword id="KW-0840">Vasodilator</keyword>
<dbReference type="SMR" id="P83225"/>
<dbReference type="GO" id="GO:0005576">
    <property type="term" value="C:extracellular region"/>
    <property type="evidence" value="ECO:0007669"/>
    <property type="project" value="UniProtKB-SubCell"/>
</dbReference>
<dbReference type="GO" id="GO:0005179">
    <property type="term" value="F:hormone activity"/>
    <property type="evidence" value="ECO:0007669"/>
    <property type="project" value="InterPro"/>
</dbReference>
<dbReference type="GO" id="GO:0090729">
    <property type="term" value="F:toxin activity"/>
    <property type="evidence" value="ECO:0007669"/>
    <property type="project" value="UniProtKB-KW"/>
</dbReference>
<dbReference type="GO" id="GO:0008217">
    <property type="term" value="P:regulation of blood pressure"/>
    <property type="evidence" value="ECO:0007669"/>
    <property type="project" value="UniProtKB-KW"/>
</dbReference>
<dbReference type="GO" id="GO:0042311">
    <property type="term" value="P:vasodilation"/>
    <property type="evidence" value="ECO:0007669"/>
    <property type="project" value="UniProtKB-KW"/>
</dbReference>
<dbReference type="InterPro" id="IPR000663">
    <property type="entry name" value="Natr_peptide"/>
</dbReference>
<dbReference type="InterPro" id="IPR030480">
    <property type="entry name" value="Natr_peptide_CS"/>
</dbReference>
<dbReference type="Pfam" id="PF00212">
    <property type="entry name" value="ANP"/>
    <property type="match status" value="1"/>
</dbReference>
<dbReference type="SMART" id="SM00183">
    <property type="entry name" value="NAT_PEP"/>
    <property type="match status" value="1"/>
</dbReference>
<dbReference type="PROSITE" id="PS00263">
    <property type="entry name" value="NATRIURETIC_PEPTIDE"/>
    <property type="match status" value="1"/>
</dbReference>
<evidence type="ECO:0000269" key="1">
    <source>
    </source>
</evidence>
<evidence type="ECO:0000303" key="2">
    <source>
    </source>
</evidence>
<evidence type="ECO:0000305" key="3"/>
<evidence type="ECO:0000305" key="4">
    <source>
    </source>
</evidence>
<accession>P83225</accession>
<organism>
    <name type="scientific">Oxyuranus scutellatus scutellatus</name>
    <name type="common">Australian taipan</name>
    <name type="synonym">Coastal taipan</name>
    <dbReference type="NCBI Taxonomy" id="8667"/>
    <lineage>
        <taxon>Eukaryota</taxon>
        <taxon>Metazoa</taxon>
        <taxon>Chordata</taxon>
        <taxon>Craniata</taxon>
        <taxon>Vertebrata</taxon>
        <taxon>Euteleostomi</taxon>
        <taxon>Lepidosauria</taxon>
        <taxon>Squamata</taxon>
        <taxon>Bifurcata</taxon>
        <taxon>Unidentata</taxon>
        <taxon>Episquamata</taxon>
        <taxon>Toxicofera</taxon>
        <taxon>Serpentes</taxon>
        <taxon>Colubroidea</taxon>
        <taxon>Elapidae</taxon>
        <taxon>Hydrophiinae</taxon>
        <taxon>Oxyuranus</taxon>
    </lineage>
</organism>
<reference key="1">
    <citation type="journal article" date="2005" name="Biochem. Biophys. Res. Commun.">
        <title>Novel natriuretic peptides from the venom of the inland taipan (Oxyuranus microlepidotus): isolation, chemical and biological characterisation.</title>
        <authorList>
            <person name="Fry B.G."/>
            <person name="Wickramaratana J.C."/>
            <person name="Lemme S."/>
            <person name="Beuve A."/>
            <person name="Garbers D."/>
            <person name="Hodgson W.C."/>
            <person name="Alewood P.F."/>
        </authorList>
    </citation>
    <scope>PROTEIN SEQUENCE</scope>
    <scope>FUNCTION</scope>
    <scope>SUBCELLULAR LOCATION</scope>
    <scope>TISSUE SPECIFICITY</scope>
    <scope>MASS SPECTROMETRY</scope>
    <scope>DISULFIDE BOND</scope>
    <source>
        <tissue>Venom</tissue>
    </source>
</reference>
<proteinExistence type="evidence at protein level"/>
<comment type="function">
    <text evidence="1">Snake venom natriuretic peptide that exhibits vasoactive and probable hypotensive activity (PubMed:15652496). Is only weakly active on natriuretic peptide receptor-C (NPR3) (PubMed:15652496).</text>
</comment>
<comment type="subcellular location">
    <subcellularLocation>
        <location evidence="1">Secreted</location>
    </subcellularLocation>
</comment>
<comment type="tissue specificity">
    <text evidence="1">Expressed by the venom gland.</text>
</comment>
<comment type="mass spectrometry" mass="3651.0" method="Electrospray" evidence="1"/>
<comment type="miscellaneous">
    <text evidence="4">Negative results: does not activate natriuretic peptide receptor-A (NPR1).</text>
</comment>
<comment type="similarity">
    <text evidence="3">Belongs to the natriuretic peptide family.</text>
</comment>
<name>VNPA_OXYSC</name>
<feature type="peptide" id="PRO_0000045070" description="Natriuretic peptide TNP-a" evidence="1">
    <location>
        <begin position="1"/>
        <end position="35"/>
    </location>
</feature>
<feature type="disulfide bond" evidence="1">
    <location>
        <begin position="9"/>
        <end position="25"/>
    </location>
</feature>
<sequence length="35" mass="3653">SDSKIGDGCFGLPLDHIGSVSGLGCNRPVQNRPKK</sequence>
<protein>
    <recommendedName>
        <fullName evidence="2">Natriuretic peptide TNP-a</fullName>
    </recommendedName>
    <alternativeName>
        <fullName>Taipan natriuretic peptide</fullName>
    </alternativeName>
    <alternativeName>
        <fullName>Venom natriuretic peptide OxsSNPa</fullName>
    </alternativeName>
</protein>